<reference key="1">
    <citation type="submission" date="2005-10" db="EMBL/GenBank/DDBJ databases">
        <title>Complete sequence of chromosome 3 of Burkholderia sp. 383.</title>
        <authorList>
            <consortium name="US DOE Joint Genome Institute"/>
            <person name="Copeland A."/>
            <person name="Lucas S."/>
            <person name="Lapidus A."/>
            <person name="Barry K."/>
            <person name="Detter J.C."/>
            <person name="Glavina T."/>
            <person name="Hammon N."/>
            <person name="Israni S."/>
            <person name="Pitluck S."/>
            <person name="Chain P."/>
            <person name="Malfatti S."/>
            <person name="Shin M."/>
            <person name="Vergez L."/>
            <person name="Schmutz J."/>
            <person name="Larimer F."/>
            <person name="Land M."/>
            <person name="Kyrpides N."/>
            <person name="Lykidis A."/>
            <person name="Richardson P."/>
        </authorList>
    </citation>
    <scope>NUCLEOTIDE SEQUENCE [LARGE SCALE GENOMIC DNA]</scope>
    <source>
        <strain>ATCC 17760 / DSM 23089 / LMG 22485 / NCIMB 9086 / R18194 / 383</strain>
    </source>
</reference>
<feature type="chain" id="PRO_0000249615" description="N-acetylmuramic acid 6-phosphate etherase">
    <location>
        <begin position="1"/>
        <end position="301"/>
    </location>
</feature>
<feature type="domain" description="SIS" evidence="1">
    <location>
        <begin position="55"/>
        <end position="215"/>
    </location>
</feature>
<feature type="active site" description="Proton donor" evidence="1">
    <location>
        <position position="83"/>
    </location>
</feature>
<feature type="active site" evidence="1">
    <location>
        <position position="111"/>
    </location>
</feature>
<gene>
    <name evidence="1" type="primary">murQ</name>
    <name type="ordered locus">Bcep18194_C7244</name>
</gene>
<organism>
    <name type="scientific">Burkholderia lata (strain ATCC 17760 / DSM 23089 / LMG 22485 / NCIMB 9086 / R18194 / 383)</name>
    <dbReference type="NCBI Taxonomy" id="482957"/>
    <lineage>
        <taxon>Bacteria</taxon>
        <taxon>Pseudomonadati</taxon>
        <taxon>Pseudomonadota</taxon>
        <taxon>Betaproteobacteria</taxon>
        <taxon>Burkholderiales</taxon>
        <taxon>Burkholderiaceae</taxon>
        <taxon>Burkholderia</taxon>
        <taxon>Burkholderia cepacia complex</taxon>
    </lineage>
</organism>
<sequence length="301" mass="30758">MHLEHLVTEQPNGQSANLDALGIPDALALMNREDAGIAARVAHALPAIASGVTVIADALRAGGRLIYIGAGNSGRIGYLDALECQPTFGTQPGEIIGIVAGGFAGITESVEDSDTLGRQDLDAAGLARGDVVVGLTASGRTPYVLGALRHARDTGCRTIAVACNVGSEAAALADVAIEVDCGPEVLTGSTRLKAGTAQKMICNMLSTISMVALGKTYGNLMVDVQVHNHKLRRRAIGIVSQAAGVPTDVAERALEQAGDRPRIAILMLCAGVDRAGAERLADAAGGSIRKALATLAPSTRA</sequence>
<protein>
    <recommendedName>
        <fullName evidence="1">N-acetylmuramic acid 6-phosphate etherase</fullName>
        <shortName evidence="1">MurNAc-6-P etherase</shortName>
        <ecNumber evidence="1">4.2.1.126</ecNumber>
    </recommendedName>
    <alternativeName>
        <fullName evidence="1">N-acetylmuramic acid 6-phosphate hydrolase</fullName>
    </alternativeName>
    <alternativeName>
        <fullName evidence="1">N-acetylmuramic acid 6-phosphate lyase</fullName>
    </alternativeName>
</protein>
<dbReference type="EC" id="4.2.1.126" evidence="1"/>
<dbReference type="EMBL" id="CP000150">
    <property type="protein sequence ID" value="ABB06288.1"/>
    <property type="molecule type" value="Genomic_DNA"/>
</dbReference>
<dbReference type="RefSeq" id="WP_011349931.1">
    <property type="nucleotide sequence ID" value="NC_007509.1"/>
</dbReference>
<dbReference type="SMR" id="Q39MM8"/>
<dbReference type="GeneID" id="45092630"/>
<dbReference type="KEGG" id="bur:Bcep18194_C7244"/>
<dbReference type="PATRIC" id="fig|482957.22.peg.7817"/>
<dbReference type="HOGENOM" id="CLU_049049_1_1_4"/>
<dbReference type="UniPathway" id="UPA00342"/>
<dbReference type="UniPathway" id="UPA00343"/>
<dbReference type="UniPathway" id="UPA00544"/>
<dbReference type="Proteomes" id="UP000002705">
    <property type="component" value="Chromosome 3"/>
</dbReference>
<dbReference type="GO" id="GO:0097367">
    <property type="term" value="F:carbohydrate derivative binding"/>
    <property type="evidence" value="ECO:0007669"/>
    <property type="project" value="InterPro"/>
</dbReference>
<dbReference type="GO" id="GO:0016835">
    <property type="term" value="F:carbon-oxygen lyase activity"/>
    <property type="evidence" value="ECO:0007669"/>
    <property type="project" value="UniProtKB-UniRule"/>
</dbReference>
<dbReference type="GO" id="GO:0016803">
    <property type="term" value="F:ether hydrolase activity"/>
    <property type="evidence" value="ECO:0007669"/>
    <property type="project" value="TreeGrafter"/>
</dbReference>
<dbReference type="GO" id="GO:0097175">
    <property type="term" value="P:1,6-anhydro-N-acetyl-beta-muramic acid catabolic process"/>
    <property type="evidence" value="ECO:0007669"/>
    <property type="project" value="UniProtKB-UniRule"/>
</dbReference>
<dbReference type="GO" id="GO:0046348">
    <property type="term" value="P:amino sugar catabolic process"/>
    <property type="evidence" value="ECO:0007669"/>
    <property type="project" value="InterPro"/>
</dbReference>
<dbReference type="GO" id="GO:0097173">
    <property type="term" value="P:N-acetylmuramic acid catabolic process"/>
    <property type="evidence" value="ECO:0007669"/>
    <property type="project" value="UniProtKB-UniPathway"/>
</dbReference>
<dbReference type="GO" id="GO:0009254">
    <property type="term" value="P:peptidoglycan turnover"/>
    <property type="evidence" value="ECO:0007669"/>
    <property type="project" value="UniProtKB-UniRule"/>
</dbReference>
<dbReference type="CDD" id="cd05007">
    <property type="entry name" value="SIS_Etherase"/>
    <property type="match status" value="1"/>
</dbReference>
<dbReference type="Gene3D" id="1.10.8.1080">
    <property type="match status" value="1"/>
</dbReference>
<dbReference type="Gene3D" id="3.40.50.10490">
    <property type="entry name" value="Glucose-6-phosphate isomerase like protein, domain 1"/>
    <property type="match status" value="1"/>
</dbReference>
<dbReference type="HAMAP" id="MF_00068">
    <property type="entry name" value="MurQ"/>
    <property type="match status" value="1"/>
</dbReference>
<dbReference type="InterPro" id="IPR005488">
    <property type="entry name" value="Etherase_MurQ"/>
</dbReference>
<dbReference type="InterPro" id="IPR005486">
    <property type="entry name" value="Glucokinase_regulatory_CS"/>
</dbReference>
<dbReference type="InterPro" id="IPR040190">
    <property type="entry name" value="MURQ/GCKR"/>
</dbReference>
<dbReference type="InterPro" id="IPR001347">
    <property type="entry name" value="SIS_dom"/>
</dbReference>
<dbReference type="InterPro" id="IPR046348">
    <property type="entry name" value="SIS_dom_sf"/>
</dbReference>
<dbReference type="NCBIfam" id="TIGR00274">
    <property type="entry name" value="N-acetylmuramic acid 6-phosphate etherase"/>
    <property type="match status" value="1"/>
</dbReference>
<dbReference type="NCBIfam" id="NF003915">
    <property type="entry name" value="PRK05441.1"/>
    <property type="match status" value="1"/>
</dbReference>
<dbReference type="NCBIfam" id="NF009222">
    <property type="entry name" value="PRK12570.1"/>
    <property type="match status" value="1"/>
</dbReference>
<dbReference type="PANTHER" id="PTHR10088">
    <property type="entry name" value="GLUCOKINASE REGULATORY PROTEIN"/>
    <property type="match status" value="1"/>
</dbReference>
<dbReference type="PANTHER" id="PTHR10088:SF4">
    <property type="entry name" value="GLUCOKINASE REGULATORY PROTEIN"/>
    <property type="match status" value="1"/>
</dbReference>
<dbReference type="Pfam" id="PF20741">
    <property type="entry name" value="GKRP-like_C"/>
    <property type="match status" value="1"/>
</dbReference>
<dbReference type="Pfam" id="PF22645">
    <property type="entry name" value="GKRP_SIS_N"/>
    <property type="match status" value="1"/>
</dbReference>
<dbReference type="SUPFAM" id="SSF53697">
    <property type="entry name" value="SIS domain"/>
    <property type="match status" value="1"/>
</dbReference>
<dbReference type="PROSITE" id="PS01272">
    <property type="entry name" value="GCKR"/>
    <property type="match status" value="1"/>
</dbReference>
<dbReference type="PROSITE" id="PS51464">
    <property type="entry name" value="SIS"/>
    <property type="match status" value="1"/>
</dbReference>
<evidence type="ECO:0000255" key="1">
    <source>
        <dbReference type="HAMAP-Rule" id="MF_00068"/>
    </source>
</evidence>
<proteinExistence type="inferred from homology"/>
<keyword id="KW-0119">Carbohydrate metabolism</keyword>
<keyword id="KW-0456">Lyase</keyword>
<name>MURQ_BURL3</name>
<accession>Q39MM8</accession>
<comment type="function">
    <text evidence="1">Specifically catalyzes the cleavage of the D-lactyl ether substituent of MurNAc 6-phosphate, producing GlcNAc 6-phosphate and D-lactate. Together with AnmK, is also required for the utilization of anhydro-N-acetylmuramic acid (anhMurNAc) either imported from the medium or derived from its own cell wall murein, and thus plays a role in cell wall recycling.</text>
</comment>
<comment type="catalytic activity">
    <reaction evidence="1">
        <text>N-acetyl-D-muramate 6-phosphate + H2O = N-acetyl-D-glucosamine 6-phosphate + (R)-lactate</text>
        <dbReference type="Rhea" id="RHEA:26410"/>
        <dbReference type="ChEBI" id="CHEBI:15377"/>
        <dbReference type="ChEBI" id="CHEBI:16004"/>
        <dbReference type="ChEBI" id="CHEBI:57513"/>
        <dbReference type="ChEBI" id="CHEBI:58722"/>
        <dbReference type="EC" id="4.2.1.126"/>
    </reaction>
</comment>
<comment type="pathway">
    <text evidence="1">Amino-sugar metabolism; 1,6-anhydro-N-acetylmuramate degradation.</text>
</comment>
<comment type="pathway">
    <text evidence="1">Amino-sugar metabolism; N-acetylmuramate degradation.</text>
</comment>
<comment type="pathway">
    <text evidence="1">Cell wall biogenesis; peptidoglycan recycling.</text>
</comment>
<comment type="subunit">
    <text evidence="1">Homodimer.</text>
</comment>
<comment type="miscellaneous">
    <text evidence="1">A lyase-type mechanism (elimination/hydration) is suggested for the cleavage of the lactyl ether bond of MurNAc 6-phosphate, with the formation of an alpha,beta-unsaturated aldehyde intermediate with (E)-stereochemistry, followed by the syn addition of water to give product.</text>
</comment>
<comment type="similarity">
    <text evidence="1">Belongs to the GCKR-like family. MurNAc-6-P etherase subfamily.</text>
</comment>